<gene>
    <name evidence="2" type="primary">trmB</name>
    <name type="ordered locus">XCC3151</name>
</gene>
<organism>
    <name type="scientific">Xanthomonas campestris pv. campestris (strain ATCC 33913 / DSM 3586 / NCPPB 528 / LMG 568 / P 25)</name>
    <dbReference type="NCBI Taxonomy" id="190485"/>
    <lineage>
        <taxon>Bacteria</taxon>
        <taxon>Pseudomonadati</taxon>
        <taxon>Pseudomonadota</taxon>
        <taxon>Gammaproteobacteria</taxon>
        <taxon>Lysobacterales</taxon>
        <taxon>Lysobacteraceae</taxon>
        <taxon>Xanthomonas</taxon>
    </lineage>
</organism>
<evidence type="ECO:0000250" key="1"/>
<evidence type="ECO:0000255" key="2">
    <source>
        <dbReference type="HAMAP-Rule" id="MF_01057"/>
    </source>
</evidence>
<proteinExistence type="inferred from homology"/>
<protein>
    <recommendedName>
        <fullName evidence="2">tRNA (guanine-N(7)-)-methyltransferase</fullName>
        <ecNumber evidence="2">2.1.1.33</ecNumber>
    </recommendedName>
    <alternativeName>
        <fullName evidence="2">tRNA (guanine(46)-N(7))-methyltransferase</fullName>
    </alternativeName>
    <alternativeName>
        <fullName evidence="2">tRNA(m7G46)-methyltransferase</fullName>
    </alternativeName>
</protein>
<accession>Q8P631</accession>
<keyword id="KW-0489">Methyltransferase</keyword>
<keyword id="KW-1185">Reference proteome</keyword>
<keyword id="KW-0949">S-adenosyl-L-methionine</keyword>
<keyword id="KW-0808">Transferase</keyword>
<keyword id="KW-0819">tRNA processing</keyword>
<comment type="function">
    <text evidence="2">Catalyzes the formation of N(7)-methylguanine at position 46 (m7G46) in tRNA.</text>
</comment>
<comment type="catalytic activity">
    <reaction evidence="2">
        <text>guanosine(46) in tRNA + S-adenosyl-L-methionine = N(7)-methylguanosine(46) in tRNA + S-adenosyl-L-homocysteine</text>
        <dbReference type="Rhea" id="RHEA:42708"/>
        <dbReference type="Rhea" id="RHEA-COMP:10188"/>
        <dbReference type="Rhea" id="RHEA-COMP:10189"/>
        <dbReference type="ChEBI" id="CHEBI:57856"/>
        <dbReference type="ChEBI" id="CHEBI:59789"/>
        <dbReference type="ChEBI" id="CHEBI:74269"/>
        <dbReference type="ChEBI" id="CHEBI:74480"/>
        <dbReference type="EC" id="2.1.1.33"/>
    </reaction>
</comment>
<comment type="pathway">
    <text evidence="2">tRNA modification; N(7)-methylguanine-tRNA biosynthesis.</text>
</comment>
<comment type="similarity">
    <text evidence="2">Belongs to the class I-like SAM-binding methyltransferase superfamily. TrmB family.</text>
</comment>
<name>TRMB_XANCP</name>
<reference key="1">
    <citation type="journal article" date="2002" name="Nature">
        <title>Comparison of the genomes of two Xanthomonas pathogens with differing host specificities.</title>
        <authorList>
            <person name="da Silva A.C.R."/>
            <person name="Ferro J.A."/>
            <person name="Reinach F.C."/>
            <person name="Farah C.S."/>
            <person name="Furlan L.R."/>
            <person name="Quaggio R.B."/>
            <person name="Monteiro-Vitorello C.B."/>
            <person name="Van Sluys M.A."/>
            <person name="Almeida N.F. Jr."/>
            <person name="Alves L.M.C."/>
            <person name="do Amaral A.M."/>
            <person name="Bertolini M.C."/>
            <person name="Camargo L.E.A."/>
            <person name="Camarotte G."/>
            <person name="Cannavan F."/>
            <person name="Cardozo J."/>
            <person name="Chambergo F."/>
            <person name="Ciapina L.P."/>
            <person name="Cicarelli R.M.B."/>
            <person name="Coutinho L.L."/>
            <person name="Cursino-Santos J.R."/>
            <person name="El-Dorry H."/>
            <person name="Faria J.B."/>
            <person name="Ferreira A.J.S."/>
            <person name="Ferreira R.C.C."/>
            <person name="Ferro M.I.T."/>
            <person name="Formighieri E.F."/>
            <person name="Franco M.C."/>
            <person name="Greggio C.C."/>
            <person name="Gruber A."/>
            <person name="Katsuyama A.M."/>
            <person name="Kishi L.T."/>
            <person name="Leite R.P."/>
            <person name="Lemos E.G.M."/>
            <person name="Lemos M.V.F."/>
            <person name="Locali E.C."/>
            <person name="Machado M.A."/>
            <person name="Madeira A.M.B.N."/>
            <person name="Martinez-Rossi N.M."/>
            <person name="Martins E.C."/>
            <person name="Meidanis J."/>
            <person name="Menck C.F.M."/>
            <person name="Miyaki C.Y."/>
            <person name="Moon D.H."/>
            <person name="Moreira L.M."/>
            <person name="Novo M.T.M."/>
            <person name="Okura V.K."/>
            <person name="Oliveira M.C."/>
            <person name="Oliveira V.R."/>
            <person name="Pereira H.A."/>
            <person name="Rossi A."/>
            <person name="Sena J.A.D."/>
            <person name="Silva C."/>
            <person name="de Souza R.F."/>
            <person name="Spinola L.A.F."/>
            <person name="Takita M.A."/>
            <person name="Tamura R.E."/>
            <person name="Teixeira E.C."/>
            <person name="Tezza R.I.D."/>
            <person name="Trindade dos Santos M."/>
            <person name="Truffi D."/>
            <person name="Tsai S.M."/>
            <person name="White F.F."/>
            <person name="Setubal J.C."/>
            <person name="Kitajima J.P."/>
        </authorList>
    </citation>
    <scope>NUCLEOTIDE SEQUENCE [LARGE SCALE GENOMIC DNA]</scope>
    <source>
        <strain>ATCC 33913 / DSM 3586 / NCPPB 528 / LMG 568 / P 25</strain>
    </source>
</reference>
<sequence length="261" mass="29376">MTDPFTSDGAKMPPKPFTIEEGRRQVRSFVLRQGRFTPAQQRAFDELWPRFGLDYTGAPRDLDAVFGRPAPKVLEIGFGNGAALRFAAQHDPARDYIGIEVHAPGVGRLLNALDDDGATHVRLYHHDAVEVLEREIADGALDEVRIYFPDPWHKKRHNKRRLVQPAFAQLLVRKLRDGGRLHAATDWADYAEQMWDVLDATEGLVNRAGPRGHVARPAWRPQTHFETRGQKLGHGVWDLLYDRESGMENRESPGQAPAAPG</sequence>
<dbReference type="EC" id="2.1.1.33" evidence="2"/>
<dbReference type="EMBL" id="AE008922">
    <property type="protein sequence ID" value="AAM42421.1"/>
    <property type="molecule type" value="Genomic_DNA"/>
</dbReference>
<dbReference type="RefSeq" id="NP_638497.1">
    <property type="nucleotide sequence ID" value="NC_003902.1"/>
</dbReference>
<dbReference type="RefSeq" id="WP_011038258.1">
    <property type="nucleotide sequence ID" value="NC_003902.1"/>
</dbReference>
<dbReference type="SMR" id="Q8P631"/>
<dbReference type="STRING" id="190485.XCC3151"/>
<dbReference type="EnsemblBacteria" id="AAM42421">
    <property type="protein sequence ID" value="AAM42421"/>
    <property type="gene ID" value="XCC3151"/>
</dbReference>
<dbReference type="KEGG" id="xcc:XCC3151"/>
<dbReference type="PATRIC" id="fig|190485.4.peg.3367"/>
<dbReference type="eggNOG" id="COG0220">
    <property type="taxonomic scope" value="Bacteria"/>
</dbReference>
<dbReference type="HOGENOM" id="CLU_050910_0_1_6"/>
<dbReference type="OrthoDB" id="9802090at2"/>
<dbReference type="UniPathway" id="UPA00989"/>
<dbReference type="Proteomes" id="UP000001010">
    <property type="component" value="Chromosome"/>
</dbReference>
<dbReference type="GO" id="GO:0043527">
    <property type="term" value="C:tRNA methyltransferase complex"/>
    <property type="evidence" value="ECO:0000318"/>
    <property type="project" value="GO_Central"/>
</dbReference>
<dbReference type="GO" id="GO:0008176">
    <property type="term" value="F:tRNA (guanine(46)-N7)-methyltransferase activity"/>
    <property type="evidence" value="ECO:0000318"/>
    <property type="project" value="GO_Central"/>
</dbReference>
<dbReference type="GO" id="GO:0036265">
    <property type="term" value="P:RNA (guanine-N7)-methylation"/>
    <property type="evidence" value="ECO:0000318"/>
    <property type="project" value="GO_Central"/>
</dbReference>
<dbReference type="GO" id="GO:0030488">
    <property type="term" value="P:tRNA methylation"/>
    <property type="evidence" value="ECO:0000318"/>
    <property type="project" value="GO_Central"/>
</dbReference>
<dbReference type="CDD" id="cd02440">
    <property type="entry name" value="AdoMet_MTases"/>
    <property type="match status" value="1"/>
</dbReference>
<dbReference type="FunFam" id="3.40.50.150:FF:000035">
    <property type="entry name" value="tRNA (guanine-N(7)-)-methyltransferase"/>
    <property type="match status" value="1"/>
</dbReference>
<dbReference type="Gene3D" id="3.40.50.150">
    <property type="entry name" value="Vaccinia Virus protein VP39"/>
    <property type="match status" value="1"/>
</dbReference>
<dbReference type="HAMAP" id="MF_01057">
    <property type="entry name" value="tRNA_methyltr_TrmB"/>
    <property type="match status" value="1"/>
</dbReference>
<dbReference type="InterPro" id="IPR029063">
    <property type="entry name" value="SAM-dependent_MTases_sf"/>
</dbReference>
<dbReference type="InterPro" id="IPR003358">
    <property type="entry name" value="tRNA_(Gua-N-7)_MeTrfase_Trmb"/>
</dbReference>
<dbReference type="InterPro" id="IPR055361">
    <property type="entry name" value="tRNA_methyltr_TrmB_bact"/>
</dbReference>
<dbReference type="NCBIfam" id="TIGR00091">
    <property type="entry name" value="tRNA (guanosine(46)-N7)-methyltransferase TrmB"/>
    <property type="match status" value="1"/>
</dbReference>
<dbReference type="PANTHER" id="PTHR23417">
    <property type="entry name" value="3-DEOXY-D-MANNO-OCTULOSONIC-ACID TRANSFERASE/TRNA GUANINE-N 7 - -METHYLTRANSFERASE"/>
    <property type="match status" value="1"/>
</dbReference>
<dbReference type="PANTHER" id="PTHR23417:SF14">
    <property type="entry name" value="PENTACOTRIPEPTIDE-REPEAT REGION OF PRORP DOMAIN-CONTAINING PROTEIN"/>
    <property type="match status" value="1"/>
</dbReference>
<dbReference type="Pfam" id="PF02390">
    <property type="entry name" value="Methyltransf_4"/>
    <property type="match status" value="1"/>
</dbReference>
<dbReference type="SUPFAM" id="SSF53335">
    <property type="entry name" value="S-adenosyl-L-methionine-dependent methyltransferases"/>
    <property type="match status" value="1"/>
</dbReference>
<dbReference type="PROSITE" id="PS51625">
    <property type="entry name" value="SAM_MT_TRMB"/>
    <property type="match status" value="1"/>
</dbReference>
<feature type="chain" id="PRO_0000171425" description="tRNA (guanine-N(7)-)-methyltransferase">
    <location>
        <begin position="1"/>
        <end position="261"/>
    </location>
</feature>
<feature type="region of interest" description="Interaction with RNA" evidence="2">
    <location>
        <begin position="156"/>
        <end position="161"/>
    </location>
</feature>
<feature type="active site" evidence="1">
    <location>
        <position position="150"/>
    </location>
</feature>
<feature type="binding site" evidence="2">
    <location>
        <position position="75"/>
    </location>
    <ligand>
        <name>S-adenosyl-L-methionine</name>
        <dbReference type="ChEBI" id="CHEBI:59789"/>
    </ligand>
</feature>
<feature type="binding site" evidence="2">
    <location>
        <position position="100"/>
    </location>
    <ligand>
        <name>S-adenosyl-L-methionine</name>
        <dbReference type="ChEBI" id="CHEBI:59789"/>
    </ligand>
</feature>
<feature type="binding site" evidence="2">
    <location>
        <position position="127"/>
    </location>
    <ligand>
        <name>S-adenosyl-L-methionine</name>
        <dbReference type="ChEBI" id="CHEBI:59789"/>
    </ligand>
</feature>
<feature type="binding site" evidence="2">
    <location>
        <position position="150"/>
    </location>
    <ligand>
        <name>S-adenosyl-L-methionine</name>
        <dbReference type="ChEBI" id="CHEBI:59789"/>
    </ligand>
</feature>
<feature type="binding site" evidence="2">
    <location>
        <position position="154"/>
    </location>
    <ligand>
        <name>substrate</name>
    </ligand>
</feature>
<feature type="binding site" evidence="2">
    <location>
        <position position="186"/>
    </location>
    <ligand>
        <name>substrate</name>
    </ligand>
</feature>
<feature type="binding site" evidence="2">
    <location>
        <begin position="223"/>
        <end position="226"/>
    </location>
    <ligand>
        <name>substrate</name>
    </ligand>
</feature>